<proteinExistence type="inferred from homology"/>
<reference key="1">
    <citation type="journal article" date="2001" name="Nature">
        <title>Massive gene decay in the leprosy bacillus.</title>
        <authorList>
            <person name="Cole S.T."/>
            <person name="Eiglmeier K."/>
            <person name="Parkhill J."/>
            <person name="James K.D."/>
            <person name="Thomson N.R."/>
            <person name="Wheeler P.R."/>
            <person name="Honore N."/>
            <person name="Garnier T."/>
            <person name="Churcher C.M."/>
            <person name="Harris D.E."/>
            <person name="Mungall K.L."/>
            <person name="Basham D."/>
            <person name="Brown D."/>
            <person name="Chillingworth T."/>
            <person name="Connor R."/>
            <person name="Davies R.M."/>
            <person name="Devlin K."/>
            <person name="Duthoy S."/>
            <person name="Feltwell T."/>
            <person name="Fraser A."/>
            <person name="Hamlin N."/>
            <person name="Holroyd S."/>
            <person name="Hornsby T."/>
            <person name="Jagels K."/>
            <person name="Lacroix C."/>
            <person name="Maclean J."/>
            <person name="Moule S."/>
            <person name="Murphy L.D."/>
            <person name="Oliver K."/>
            <person name="Quail M.A."/>
            <person name="Rajandream M.A."/>
            <person name="Rutherford K.M."/>
            <person name="Rutter S."/>
            <person name="Seeger K."/>
            <person name="Simon S."/>
            <person name="Simmonds M."/>
            <person name="Skelton J."/>
            <person name="Squares R."/>
            <person name="Squares S."/>
            <person name="Stevens K."/>
            <person name="Taylor K."/>
            <person name="Whitehead S."/>
            <person name="Woodward J.R."/>
            <person name="Barrell B.G."/>
        </authorList>
    </citation>
    <scope>NUCLEOTIDE SEQUENCE [LARGE SCALE GENOMIC DNA]</scope>
    <source>
        <strain>TN</strain>
    </source>
</reference>
<dbReference type="EC" id="2.7.1.148" evidence="2"/>
<dbReference type="EMBL" id="AL583917">
    <property type="protein sequence ID" value="CAC29750.1"/>
    <property type="status" value="ALT_INIT"/>
    <property type="molecule type" value="Genomic_DNA"/>
</dbReference>
<dbReference type="PIR" id="B86939">
    <property type="entry name" value="B86939"/>
</dbReference>
<dbReference type="SMR" id="Q9CD51"/>
<dbReference type="STRING" id="272631.gene:17574059"/>
<dbReference type="KEGG" id="mle:ML0242"/>
<dbReference type="PATRIC" id="fig|272631.5.peg.376"/>
<dbReference type="Leproma" id="ML0242"/>
<dbReference type="eggNOG" id="COG1947">
    <property type="taxonomic scope" value="Bacteria"/>
</dbReference>
<dbReference type="HOGENOM" id="CLU_053057_1_1_11"/>
<dbReference type="UniPathway" id="UPA00056">
    <property type="reaction ID" value="UER00094"/>
</dbReference>
<dbReference type="Proteomes" id="UP000000806">
    <property type="component" value="Chromosome"/>
</dbReference>
<dbReference type="GO" id="GO:0050515">
    <property type="term" value="F:4-(cytidine 5'-diphospho)-2-C-methyl-D-erythritol kinase activity"/>
    <property type="evidence" value="ECO:0007669"/>
    <property type="project" value="UniProtKB-UniRule"/>
</dbReference>
<dbReference type="GO" id="GO:0005524">
    <property type="term" value="F:ATP binding"/>
    <property type="evidence" value="ECO:0007669"/>
    <property type="project" value="UniProtKB-UniRule"/>
</dbReference>
<dbReference type="GO" id="GO:0019288">
    <property type="term" value="P:isopentenyl diphosphate biosynthetic process, methylerythritol 4-phosphate pathway"/>
    <property type="evidence" value="ECO:0007669"/>
    <property type="project" value="UniProtKB-UniRule"/>
</dbReference>
<dbReference type="GO" id="GO:0016114">
    <property type="term" value="P:terpenoid biosynthetic process"/>
    <property type="evidence" value="ECO:0007669"/>
    <property type="project" value="InterPro"/>
</dbReference>
<dbReference type="FunFam" id="3.30.70.890:FF:000013">
    <property type="entry name" value="4-diphosphocytidyl-2-C-methyl-D-erythritol kinase"/>
    <property type="match status" value="1"/>
</dbReference>
<dbReference type="Gene3D" id="3.30.230.10">
    <property type="match status" value="1"/>
</dbReference>
<dbReference type="Gene3D" id="3.30.70.890">
    <property type="entry name" value="GHMP kinase, C-terminal domain"/>
    <property type="match status" value="1"/>
</dbReference>
<dbReference type="HAMAP" id="MF_00061">
    <property type="entry name" value="IspE"/>
    <property type="match status" value="1"/>
</dbReference>
<dbReference type="InterPro" id="IPR013750">
    <property type="entry name" value="GHMP_kinase_C_dom"/>
</dbReference>
<dbReference type="InterPro" id="IPR036554">
    <property type="entry name" value="GHMP_kinase_C_sf"/>
</dbReference>
<dbReference type="InterPro" id="IPR006204">
    <property type="entry name" value="GHMP_kinase_N_dom"/>
</dbReference>
<dbReference type="InterPro" id="IPR004424">
    <property type="entry name" value="IspE"/>
</dbReference>
<dbReference type="InterPro" id="IPR020568">
    <property type="entry name" value="Ribosomal_Su5_D2-typ_SF"/>
</dbReference>
<dbReference type="InterPro" id="IPR014721">
    <property type="entry name" value="Ribsml_uS5_D2-typ_fold_subgr"/>
</dbReference>
<dbReference type="NCBIfam" id="TIGR00154">
    <property type="entry name" value="ispE"/>
    <property type="match status" value="1"/>
</dbReference>
<dbReference type="NCBIfam" id="NF002870">
    <property type="entry name" value="PRK03188.1"/>
    <property type="match status" value="1"/>
</dbReference>
<dbReference type="PANTHER" id="PTHR43527">
    <property type="entry name" value="4-DIPHOSPHOCYTIDYL-2-C-METHYL-D-ERYTHRITOL KINASE, CHLOROPLASTIC"/>
    <property type="match status" value="1"/>
</dbReference>
<dbReference type="PANTHER" id="PTHR43527:SF2">
    <property type="entry name" value="4-DIPHOSPHOCYTIDYL-2-C-METHYL-D-ERYTHRITOL KINASE, CHLOROPLASTIC"/>
    <property type="match status" value="1"/>
</dbReference>
<dbReference type="Pfam" id="PF08544">
    <property type="entry name" value="GHMP_kinases_C"/>
    <property type="match status" value="1"/>
</dbReference>
<dbReference type="Pfam" id="PF00288">
    <property type="entry name" value="GHMP_kinases_N"/>
    <property type="match status" value="1"/>
</dbReference>
<dbReference type="PIRSF" id="PIRSF010376">
    <property type="entry name" value="IspE"/>
    <property type="match status" value="1"/>
</dbReference>
<dbReference type="SUPFAM" id="SSF55060">
    <property type="entry name" value="GHMP Kinase, C-terminal domain"/>
    <property type="match status" value="1"/>
</dbReference>
<dbReference type="SUPFAM" id="SSF54211">
    <property type="entry name" value="Ribosomal protein S5 domain 2-like"/>
    <property type="match status" value="1"/>
</dbReference>
<keyword id="KW-0067">ATP-binding</keyword>
<keyword id="KW-0414">Isoprene biosynthesis</keyword>
<keyword id="KW-0418">Kinase</keyword>
<keyword id="KW-0547">Nucleotide-binding</keyword>
<keyword id="KW-1185">Reference proteome</keyword>
<keyword id="KW-0808">Transferase</keyword>
<name>ISPE_MYCLE</name>
<comment type="function">
    <text evidence="2">Catalyzes the phosphorylation of the position 2 hydroxy group of 4-diphosphocytidyl-2C-methyl-D-erythritol.</text>
</comment>
<comment type="catalytic activity">
    <reaction evidence="2">
        <text>4-CDP-2-C-methyl-D-erythritol + ATP = 4-CDP-2-C-methyl-D-erythritol 2-phosphate + ADP + H(+)</text>
        <dbReference type="Rhea" id="RHEA:18437"/>
        <dbReference type="ChEBI" id="CHEBI:15378"/>
        <dbReference type="ChEBI" id="CHEBI:30616"/>
        <dbReference type="ChEBI" id="CHEBI:57823"/>
        <dbReference type="ChEBI" id="CHEBI:57919"/>
        <dbReference type="ChEBI" id="CHEBI:456216"/>
        <dbReference type="EC" id="2.7.1.148"/>
    </reaction>
</comment>
<comment type="pathway">
    <text evidence="2">Isoprenoid biosynthesis; isopentenyl diphosphate biosynthesis via DXP pathway; isopentenyl diphosphate from 1-deoxy-D-xylulose 5-phosphate: step 3/6.</text>
</comment>
<comment type="similarity">
    <text evidence="2">Belongs to the GHMP kinase family. IspE subfamily.</text>
</comment>
<comment type="sequence caution" evidence="1">
    <conflict type="erroneous initiation">
        <sequence resource="EMBL-CDS" id="CAC29750"/>
    </conflict>
    <text>Truncated N-terminus.</text>
</comment>
<accession>Q9CD51</accession>
<gene>
    <name evidence="2" type="primary">ispE</name>
    <name type="ordered locus">ML0242</name>
</gene>
<feature type="chain" id="PRO_0000189233" description="4-diphosphocytidyl-2-C-methyl-D-erythritol kinase">
    <location>
        <begin position="1"/>
        <end position="323"/>
    </location>
</feature>
<feature type="active site" evidence="2">
    <location>
        <position position="25"/>
    </location>
</feature>
<feature type="active site" evidence="2">
    <location>
        <position position="152"/>
    </location>
</feature>
<feature type="binding site" evidence="2">
    <location>
        <begin position="110"/>
        <end position="120"/>
    </location>
    <ligand>
        <name>ATP</name>
        <dbReference type="ChEBI" id="CHEBI:30616"/>
    </ligand>
</feature>
<evidence type="ECO:0000250" key="1">
    <source>
        <dbReference type="UniProtKB" id="P9WKG7"/>
    </source>
</evidence>
<evidence type="ECO:0000255" key="2">
    <source>
        <dbReference type="HAMAP-Rule" id="MF_00061"/>
    </source>
</evidence>
<protein>
    <recommendedName>
        <fullName evidence="2">4-diphosphocytidyl-2-C-methyl-D-erythritol kinase</fullName>
        <shortName evidence="2">CMK</shortName>
        <ecNumber evidence="2">2.7.1.148</ecNumber>
    </recommendedName>
    <alternativeName>
        <fullName evidence="2">4-(cytidine-5'-diphospho)-2-C-methyl-D-erythritol kinase</fullName>
    </alternativeName>
</protein>
<organism>
    <name type="scientific">Mycobacterium leprae (strain TN)</name>
    <dbReference type="NCBI Taxonomy" id="272631"/>
    <lineage>
        <taxon>Bacteria</taxon>
        <taxon>Bacillati</taxon>
        <taxon>Actinomycetota</taxon>
        <taxon>Actinomycetes</taxon>
        <taxon>Mycobacteriales</taxon>
        <taxon>Mycobacteriaceae</taxon>
        <taxon>Mycobacterium</taxon>
    </lineage>
</organism>
<sequence length="323" mass="33074">MFASDGNAATQWMPTGSVTVQVPGKINLYLAVGDCCDNGYHELVTVFHAVSLVDQVTVRNADVLSLGLVGEGANHVPTDEHNIAWRAAELMAEHVGRAPDVSIMIDKSIPVAGGMAGGSADAAAVLVAMNSLWELSLPRRDLCMLAAKLGSDVPFALHGGTALGTGRGEELATVLSRATFHWVLAFADSSLLTPAVYTEFDRLRDVGNPPRLAEPGPVLAALVAADPEQLAPLLGNELQAAAVSLDPALRCALRAGMEAGALAGIVSGSGPTCAFLCASATSAIDVGAQLAGAGVCRTVRVATGPVPGARVVHAPMSRGLNDM</sequence>